<accession>A1VJK1</accession>
<keyword id="KW-0963">Cytoplasm</keyword>
<keyword id="KW-0255">Endonuclease</keyword>
<keyword id="KW-0378">Hydrolase</keyword>
<keyword id="KW-0479">Metal-binding</keyword>
<keyword id="KW-0540">Nuclease</keyword>
<keyword id="KW-1185">Reference proteome</keyword>
<keyword id="KW-0690">Ribosome biogenesis</keyword>
<keyword id="KW-0698">rRNA processing</keyword>
<keyword id="KW-0862">Zinc</keyword>
<evidence type="ECO:0000255" key="1">
    <source>
        <dbReference type="HAMAP-Rule" id="MF_00009"/>
    </source>
</evidence>
<organism>
    <name type="scientific">Polaromonas naphthalenivorans (strain CJ2)</name>
    <dbReference type="NCBI Taxonomy" id="365044"/>
    <lineage>
        <taxon>Bacteria</taxon>
        <taxon>Pseudomonadati</taxon>
        <taxon>Pseudomonadota</taxon>
        <taxon>Betaproteobacteria</taxon>
        <taxon>Burkholderiales</taxon>
        <taxon>Comamonadaceae</taxon>
        <taxon>Polaromonas</taxon>
    </lineage>
</organism>
<gene>
    <name evidence="1" type="primary">ybeY</name>
    <name type="ordered locus">Pnap_0508</name>
</gene>
<reference key="1">
    <citation type="journal article" date="2009" name="Environ. Microbiol.">
        <title>The genome of Polaromonas naphthalenivorans strain CJ2, isolated from coal tar-contaminated sediment, reveals physiological and metabolic versatility and evolution through extensive horizontal gene transfer.</title>
        <authorList>
            <person name="Yagi J.M."/>
            <person name="Sims D."/>
            <person name="Brettin T."/>
            <person name="Bruce D."/>
            <person name="Madsen E.L."/>
        </authorList>
    </citation>
    <scope>NUCLEOTIDE SEQUENCE [LARGE SCALE GENOMIC DNA]</scope>
    <source>
        <strain>CJ2</strain>
    </source>
</reference>
<feature type="chain" id="PRO_0000284267" description="Endoribonuclease YbeY">
    <location>
        <begin position="1"/>
        <end position="151"/>
    </location>
</feature>
<feature type="binding site" evidence="1">
    <location>
        <position position="113"/>
    </location>
    <ligand>
        <name>Zn(2+)</name>
        <dbReference type="ChEBI" id="CHEBI:29105"/>
        <note>catalytic</note>
    </ligand>
</feature>
<feature type="binding site" evidence="1">
    <location>
        <position position="117"/>
    </location>
    <ligand>
        <name>Zn(2+)</name>
        <dbReference type="ChEBI" id="CHEBI:29105"/>
        <note>catalytic</note>
    </ligand>
</feature>
<feature type="binding site" evidence="1">
    <location>
        <position position="123"/>
    </location>
    <ligand>
        <name>Zn(2+)</name>
        <dbReference type="ChEBI" id="CHEBI:29105"/>
        <note>catalytic</note>
    </ligand>
</feature>
<comment type="function">
    <text evidence="1">Single strand-specific metallo-endoribonuclease involved in late-stage 70S ribosome quality control and in maturation of the 3' terminus of the 16S rRNA.</text>
</comment>
<comment type="cofactor">
    <cofactor evidence="1">
        <name>Zn(2+)</name>
        <dbReference type="ChEBI" id="CHEBI:29105"/>
    </cofactor>
    <text evidence="1">Binds 1 zinc ion.</text>
</comment>
<comment type="subcellular location">
    <subcellularLocation>
        <location evidence="1">Cytoplasm</location>
    </subcellularLocation>
</comment>
<comment type="similarity">
    <text evidence="1">Belongs to the endoribonuclease YbeY family.</text>
</comment>
<proteinExistence type="inferred from homology"/>
<sequence length="151" mass="16772">MALNSLSLSLQFGKFPDAALHRAALPRHSVARWIRHALQSDAEITVRIVGAEEGQALNRDYRAKDYATNVLTFDYTQAPYVTADLVLCAPVVAKEAQDNQKTLQAHYAHLLVHGTLHAQGYDHETGEEDAEEMEALEIEILAGLGFDNPYR</sequence>
<name>YBEY_POLNA</name>
<dbReference type="EC" id="3.1.-.-" evidence="1"/>
<dbReference type="EMBL" id="CP000529">
    <property type="protein sequence ID" value="ABM35829.1"/>
    <property type="molecule type" value="Genomic_DNA"/>
</dbReference>
<dbReference type="RefSeq" id="WP_011799929.1">
    <property type="nucleotide sequence ID" value="NC_008781.1"/>
</dbReference>
<dbReference type="SMR" id="A1VJK1"/>
<dbReference type="STRING" id="365044.Pnap_0508"/>
<dbReference type="KEGG" id="pna:Pnap_0508"/>
<dbReference type="eggNOG" id="COG0319">
    <property type="taxonomic scope" value="Bacteria"/>
</dbReference>
<dbReference type="HOGENOM" id="CLU_106710_0_1_4"/>
<dbReference type="OrthoDB" id="9807740at2"/>
<dbReference type="Proteomes" id="UP000000644">
    <property type="component" value="Chromosome"/>
</dbReference>
<dbReference type="GO" id="GO:0005737">
    <property type="term" value="C:cytoplasm"/>
    <property type="evidence" value="ECO:0007669"/>
    <property type="project" value="UniProtKB-SubCell"/>
</dbReference>
<dbReference type="GO" id="GO:0004222">
    <property type="term" value="F:metalloendopeptidase activity"/>
    <property type="evidence" value="ECO:0007669"/>
    <property type="project" value="InterPro"/>
</dbReference>
<dbReference type="GO" id="GO:0004521">
    <property type="term" value="F:RNA endonuclease activity"/>
    <property type="evidence" value="ECO:0007669"/>
    <property type="project" value="UniProtKB-UniRule"/>
</dbReference>
<dbReference type="GO" id="GO:0008270">
    <property type="term" value="F:zinc ion binding"/>
    <property type="evidence" value="ECO:0007669"/>
    <property type="project" value="UniProtKB-UniRule"/>
</dbReference>
<dbReference type="GO" id="GO:0006364">
    <property type="term" value="P:rRNA processing"/>
    <property type="evidence" value="ECO:0007669"/>
    <property type="project" value="UniProtKB-UniRule"/>
</dbReference>
<dbReference type="Gene3D" id="3.40.390.30">
    <property type="entry name" value="Metalloproteases ('zincins'), catalytic domain"/>
    <property type="match status" value="1"/>
</dbReference>
<dbReference type="HAMAP" id="MF_00009">
    <property type="entry name" value="Endoribonucl_YbeY"/>
    <property type="match status" value="1"/>
</dbReference>
<dbReference type="InterPro" id="IPR023091">
    <property type="entry name" value="MetalPrtase_cat_dom_sf_prd"/>
</dbReference>
<dbReference type="InterPro" id="IPR002036">
    <property type="entry name" value="YbeY"/>
</dbReference>
<dbReference type="InterPro" id="IPR020549">
    <property type="entry name" value="YbeY_CS"/>
</dbReference>
<dbReference type="NCBIfam" id="TIGR00043">
    <property type="entry name" value="rRNA maturation RNase YbeY"/>
    <property type="match status" value="1"/>
</dbReference>
<dbReference type="PANTHER" id="PTHR46986">
    <property type="entry name" value="ENDORIBONUCLEASE YBEY, CHLOROPLASTIC"/>
    <property type="match status" value="1"/>
</dbReference>
<dbReference type="PANTHER" id="PTHR46986:SF1">
    <property type="entry name" value="ENDORIBONUCLEASE YBEY, CHLOROPLASTIC"/>
    <property type="match status" value="1"/>
</dbReference>
<dbReference type="Pfam" id="PF02130">
    <property type="entry name" value="YbeY"/>
    <property type="match status" value="1"/>
</dbReference>
<dbReference type="SUPFAM" id="SSF55486">
    <property type="entry name" value="Metalloproteases ('zincins'), catalytic domain"/>
    <property type="match status" value="1"/>
</dbReference>
<dbReference type="PROSITE" id="PS01306">
    <property type="entry name" value="UPF0054"/>
    <property type="match status" value="1"/>
</dbReference>
<protein>
    <recommendedName>
        <fullName evidence="1">Endoribonuclease YbeY</fullName>
        <ecNumber evidence="1">3.1.-.-</ecNumber>
    </recommendedName>
</protein>